<proteinExistence type="inferred from homology"/>
<reference key="1">
    <citation type="journal article" date="2010" name="Genome Biol.">
        <title>Structure and dynamics of the pan-genome of Streptococcus pneumoniae and closely related species.</title>
        <authorList>
            <person name="Donati C."/>
            <person name="Hiller N.L."/>
            <person name="Tettelin H."/>
            <person name="Muzzi A."/>
            <person name="Croucher N.J."/>
            <person name="Angiuoli S.V."/>
            <person name="Oggioni M."/>
            <person name="Dunning Hotopp J.C."/>
            <person name="Hu F.Z."/>
            <person name="Riley D.R."/>
            <person name="Covacci A."/>
            <person name="Mitchell T.J."/>
            <person name="Bentley S.D."/>
            <person name="Kilian M."/>
            <person name="Ehrlich G.D."/>
            <person name="Rappuoli R."/>
            <person name="Moxon E.R."/>
            <person name="Masignani V."/>
        </authorList>
    </citation>
    <scope>NUCLEOTIDE SEQUENCE [LARGE SCALE GENOMIC DNA]</scope>
    <source>
        <strain>70585</strain>
    </source>
</reference>
<gene>
    <name evidence="1" type="primary">glyQ</name>
    <name type="ordered locus">SP70585_1517</name>
</gene>
<protein>
    <recommendedName>
        <fullName evidence="1">Glycine--tRNA ligase alpha subunit</fullName>
        <ecNumber evidence="1">6.1.1.14</ecNumber>
    </recommendedName>
    <alternativeName>
        <fullName evidence="1">Glycyl-tRNA synthetase alpha subunit</fullName>
        <shortName evidence="1">GlyRS</shortName>
    </alternativeName>
</protein>
<dbReference type="EC" id="6.1.1.14" evidence="1"/>
<dbReference type="EMBL" id="CP000918">
    <property type="protein sequence ID" value="ACO17343.1"/>
    <property type="molecule type" value="Genomic_DNA"/>
</dbReference>
<dbReference type="RefSeq" id="WP_000038738.1">
    <property type="nucleotide sequence ID" value="NC_012468.1"/>
</dbReference>
<dbReference type="SMR" id="C1C871"/>
<dbReference type="KEGG" id="snm:SP70585_1517"/>
<dbReference type="HOGENOM" id="CLU_057066_1_0_9"/>
<dbReference type="Proteomes" id="UP000002211">
    <property type="component" value="Chromosome"/>
</dbReference>
<dbReference type="GO" id="GO:0005829">
    <property type="term" value="C:cytosol"/>
    <property type="evidence" value="ECO:0007669"/>
    <property type="project" value="TreeGrafter"/>
</dbReference>
<dbReference type="GO" id="GO:0005524">
    <property type="term" value="F:ATP binding"/>
    <property type="evidence" value="ECO:0007669"/>
    <property type="project" value="UniProtKB-UniRule"/>
</dbReference>
<dbReference type="GO" id="GO:0140096">
    <property type="term" value="F:catalytic activity, acting on a protein"/>
    <property type="evidence" value="ECO:0007669"/>
    <property type="project" value="UniProtKB-ARBA"/>
</dbReference>
<dbReference type="GO" id="GO:0004820">
    <property type="term" value="F:glycine-tRNA ligase activity"/>
    <property type="evidence" value="ECO:0007669"/>
    <property type="project" value="UniProtKB-UniRule"/>
</dbReference>
<dbReference type="GO" id="GO:0016740">
    <property type="term" value="F:transferase activity"/>
    <property type="evidence" value="ECO:0007669"/>
    <property type="project" value="UniProtKB-ARBA"/>
</dbReference>
<dbReference type="GO" id="GO:0006426">
    <property type="term" value="P:glycyl-tRNA aminoacylation"/>
    <property type="evidence" value="ECO:0007669"/>
    <property type="project" value="UniProtKB-UniRule"/>
</dbReference>
<dbReference type="CDD" id="cd00733">
    <property type="entry name" value="GlyRS_alpha_core"/>
    <property type="match status" value="1"/>
</dbReference>
<dbReference type="FunFam" id="3.30.930.10:FF:000006">
    <property type="entry name" value="Glycine--tRNA ligase alpha subunit"/>
    <property type="match status" value="1"/>
</dbReference>
<dbReference type="Gene3D" id="3.30.930.10">
    <property type="entry name" value="Bira Bifunctional Protein, Domain 2"/>
    <property type="match status" value="1"/>
</dbReference>
<dbReference type="Gene3D" id="1.20.58.180">
    <property type="entry name" value="Class II aaRS and biotin synthetases, domain 2"/>
    <property type="match status" value="1"/>
</dbReference>
<dbReference type="HAMAP" id="MF_00254">
    <property type="entry name" value="Gly_tRNA_synth_alpha"/>
    <property type="match status" value="1"/>
</dbReference>
<dbReference type="InterPro" id="IPR045864">
    <property type="entry name" value="aa-tRNA-synth_II/BPL/LPL"/>
</dbReference>
<dbReference type="InterPro" id="IPR006194">
    <property type="entry name" value="Gly-tRNA-synth_heterodimer"/>
</dbReference>
<dbReference type="InterPro" id="IPR002310">
    <property type="entry name" value="Gly-tRNA_ligase_asu"/>
</dbReference>
<dbReference type="NCBIfam" id="TIGR00388">
    <property type="entry name" value="glyQ"/>
    <property type="match status" value="1"/>
</dbReference>
<dbReference type="NCBIfam" id="NF006827">
    <property type="entry name" value="PRK09348.1"/>
    <property type="match status" value="1"/>
</dbReference>
<dbReference type="PANTHER" id="PTHR30075:SF2">
    <property type="entry name" value="GLYCINE--TRNA LIGASE, CHLOROPLASTIC_MITOCHONDRIAL 2"/>
    <property type="match status" value="1"/>
</dbReference>
<dbReference type="PANTHER" id="PTHR30075">
    <property type="entry name" value="GLYCYL-TRNA SYNTHETASE"/>
    <property type="match status" value="1"/>
</dbReference>
<dbReference type="Pfam" id="PF02091">
    <property type="entry name" value="tRNA-synt_2e"/>
    <property type="match status" value="1"/>
</dbReference>
<dbReference type="PRINTS" id="PR01044">
    <property type="entry name" value="TRNASYNTHGA"/>
</dbReference>
<dbReference type="SUPFAM" id="SSF55681">
    <property type="entry name" value="Class II aaRS and biotin synthetases"/>
    <property type="match status" value="1"/>
</dbReference>
<dbReference type="PROSITE" id="PS50861">
    <property type="entry name" value="AA_TRNA_LIGASE_II_GLYAB"/>
    <property type="match status" value="1"/>
</dbReference>
<comment type="catalytic activity">
    <reaction evidence="1">
        <text>tRNA(Gly) + glycine + ATP = glycyl-tRNA(Gly) + AMP + diphosphate</text>
        <dbReference type="Rhea" id="RHEA:16013"/>
        <dbReference type="Rhea" id="RHEA-COMP:9664"/>
        <dbReference type="Rhea" id="RHEA-COMP:9683"/>
        <dbReference type="ChEBI" id="CHEBI:30616"/>
        <dbReference type="ChEBI" id="CHEBI:33019"/>
        <dbReference type="ChEBI" id="CHEBI:57305"/>
        <dbReference type="ChEBI" id="CHEBI:78442"/>
        <dbReference type="ChEBI" id="CHEBI:78522"/>
        <dbReference type="ChEBI" id="CHEBI:456215"/>
        <dbReference type="EC" id="6.1.1.14"/>
    </reaction>
</comment>
<comment type="subunit">
    <text evidence="1">Tetramer of two alpha and two beta subunits.</text>
</comment>
<comment type="subcellular location">
    <subcellularLocation>
        <location evidence="1">Cytoplasm</location>
    </subcellularLocation>
</comment>
<comment type="similarity">
    <text evidence="1">Belongs to the class-II aminoacyl-tRNA synthetase family.</text>
</comment>
<feature type="chain" id="PRO_1000125557" description="Glycine--tRNA ligase alpha subunit">
    <location>
        <begin position="1"/>
        <end position="305"/>
    </location>
</feature>
<accession>C1C871</accession>
<name>SYGA_STRP7</name>
<sequence length="305" mass="34934">MSKKLTFQEIILTLQQFWNDQGCMLMQAYDNEKGAGTMSPYTFLRAIGPEPWNAAYVEPSRRPADGRYGENPNRLYQHHQFQVVMKPSPSNIQELYLESLEKLGINPLEHDIRFVEDNWENPSTGSAGLGWEVWLDGMEITQFTYFQQVGGLATGPVTAEVTYGLERLASYIQEVDSVYDIEWADGVKYGEIFIQPEYEHSKYSFEISDQEMLLENFDKFEKEAGRALEEGLVHPAYDYVLKCSHTFNLLDARGAVSVTERAGYIARIRNLARVVAKTFVAERKRLGYPLLDEETRVKLLAEDAE</sequence>
<evidence type="ECO:0000255" key="1">
    <source>
        <dbReference type="HAMAP-Rule" id="MF_00254"/>
    </source>
</evidence>
<keyword id="KW-0030">Aminoacyl-tRNA synthetase</keyword>
<keyword id="KW-0067">ATP-binding</keyword>
<keyword id="KW-0963">Cytoplasm</keyword>
<keyword id="KW-0436">Ligase</keyword>
<keyword id="KW-0547">Nucleotide-binding</keyword>
<keyword id="KW-0648">Protein biosynthesis</keyword>
<organism>
    <name type="scientific">Streptococcus pneumoniae (strain 70585)</name>
    <dbReference type="NCBI Taxonomy" id="488221"/>
    <lineage>
        <taxon>Bacteria</taxon>
        <taxon>Bacillati</taxon>
        <taxon>Bacillota</taxon>
        <taxon>Bacilli</taxon>
        <taxon>Lactobacillales</taxon>
        <taxon>Streptococcaceae</taxon>
        <taxon>Streptococcus</taxon>
    </lineage>
</organism>